<organism>
    <name type="scientific">Oryctolagus cuniculus</name>
    <name type="common">Rabbit</name>
    <dbReference type="NCBI Taxonomy" id="9986"/>
    <lineage>
        <taxon>Eukaryota</taxon>
        <taxon>Metazoa</taxon>
        <taxon>Chordata</taxon>
        <taxon>Craniata</taxon>
        <taxon>Vertebrata</taxon>
        <taxon>Euteleostomi</taxon>
        <taxon>Mammalia</taxon>
        <taxon>Eutheria</taxon>
        <taxon>Euarchontoglires</taxon>
        <taxon>Glires</taxon>
        <taxon>Lagomorpha</taxon>
        <taxon>Leporidae</taxon>
        <taxon>Oryctolagus</taxon>
    </lineage>
</organism>
<proteinExistence type="evidence at protein level"/>
<sequence length="718" mass="76965">MNPAEAKAVPISKEMEGPHPHSKKRHRRQDAKTEPEKSQSTKPPVDHEKKAQEGKPKEHTKPKSTHKHASDGEGKHGRNEKTASRSKEPVTPAKRTEPETKPQDTKPAGGKSVAAGTTAAPGKAGDPKKEKKSLPAAALAEPKPDEPSGKSGMDAALDDLIDTLGEPSETQEDSTAYTGPEISDPMSSTYIEELGKREVTIPPKYRELLEKKTGVAGPPPDSVTPLGPDDAIDALSSDFTCSSPVASGKEAGKEAAKSAGEVLEAESAKVMRAAAPPQEKKRKVEEDAMSDQALEALSASLGTRMAEPELDLSSIKEVAEAKRKEEKVEKCGEDDETVPAEYRLKPATDKDGKPLLPEPAEKPKPRSESELIDELSKDFSQAKSNEKQPKPTGKTEESKAAVPAPVAEAVPRTSMCSIQPVPPKPASLQKSTVPDDAVEALAGSLGRKEADPEEGKPVADKIKEKSKEEEREKLGEKEETIPPDYRLEEAKDKDGKPLLPSEPTAQLPALSEDLLLDALSEDFSGPSSASSLKFDDAMLSAAVSEVVSQSPASITRATAPPPDTRPSNKELDDALDKLSDSLGQRQPDPDENKPMEDKVKERAKKEHKDKLGERDDTIPPEYRHLLDQGEQDKPEKPPTKKSKEIKKPAGDQDPIDALSGDLDSCPPAAETSQATEKDKSKTTTASSSKAAKHGDKAKDSAQTTEETSKPKANEKNAS</sequence>
<reference key="1">
    <citation type="journal article" date="1987" name="Proc. Natl. Acad. Sci. U.S.A.">
        <title>Endogenous inhibitor for calcium-dependent cysteine protease contains four internal repeats that could be responsible for its multiple reactive sites.</title>
        <authorList>
            <person name="Emori Y."/>
            <person name="Kawasaki H."/>
            <person name="Imajoh S."/>
            <person name="Imahori K."/>
            <person name="Suzuki K."/>
        </authorList>
    </citation>
    <scope>NUCLEOTIDE SEQUENCE [MRNA]</scope>
    <scope>PARTIAL PROTEIN SEQUENCE</scope>
    <source>
        <tissue>Liver</tissue>
    </source>
</reference>
<reference key="2">
    <citation type="journal article" date="1987" name="Biochem. Biophys. Res. Commun.">
        <title>Calcium-activated neutral protease inhibitor from rabbit erythrocytes lacks the N-terminal region of the liver inhibitor but retains three inhibitory units.</title>
        <authorList>
            <person name="Imajoh S."/>
            <person name="Kawasaki H."/>
            <person name="Emori Y."/>
            <person name="Suzuki K."/>
        </authorList>
    </citation>
    <scope>PROTEIN SEQUENCE OF 290-718</scope>
    <source>
        <tissue>Erythrocyte</tissue>
    </source>
</reference>
<reference key="3">
    <citation type="journal article" date="1987" name="FEBS Lett.">
        <title>A fragment of an endogenous inhibitor produced in Escherichia coli for calcium-activated neutral protease (CANP) retains an inhibitory activity.</title>
        <authorList>
            <person name="Imajoh S."/>
            <person name="Kawasaki H."/>
            <person name="Emori Y."/>
            <person name="Ishiura S."/>
            <person name="Minami Y."/>
            <person name="Sugita H."/>
            <person name="Imahori K."/>
            <person name="Suzuki K."/>
        </authorList>
    </citation>
    <scope>PARTIAL PROTEIN SEQUENCE</scope>
    <source>
        <tissue>Erythrocyte</tissue>
    </source>
</reference>
<feature type="chain" id="PRO_0000004168" description="Calpastatin">
    <location>
        <begin position="1"/>
        <end position="718"/>
    </location>
</feature>
<feature type="chain" id="PRO_0000004169" description="Erythrocyte calpastatin">
    <location>
        <begin position="290"/>
        <end position="718"/>
    </location>
</feature>
<feature type="repeat" description="Inhibitory domain 1">
    <location>
        <begin position="170"/>
        <end position="222"/>
    </location>
</feature>
<feature type="repeat" description="Inhibitory domain 2">
    <location>
        <begin position="307"/>
        <end position="359"/>
    </location>
</feature>
<feature type="repeat" description="Inhibitory domain 3">
    <location>
        <begin position="450"/>
        <end position="503"/>
    </location>
</feature>
<feature type="repeat" description="Inhibitory domain 4">
    <location>
        <begin position="587"/>
        <end position="640"/>
    </location>
</feature>
<feature type="region of interest" description="Disordered" evidence="4">
    <location>
        <begin position="1"/>
        <end position="189"/>
    </location>
</feature>
<feature type="region of interest" description="Disordered" evidence="4">
    <location>
        <begin position="210"/>
        <end position="238"/>
    </location>
</feature>
<feature type="region of interest" description="Disordered" evidence="4">
    <location>
        <begin position="266"/>
        <end position="291"/>
    </location>
</feature>
<feature type="region of interest" description="Disordered" evidence="4">
    <location>
        <begin position="320"/>
        <end position="509"/>
    </location>
</feature>
<feature type="region of interest" description="Disordered" evidence="4">
    <location>
        <begin position="543"/>
        <end position="718"/>
    </location>
</feature>
<feature type="compositionally biased region" description="Basic residues" evidence="4">
    <location>
        <begin position="20"/>
        <end position="29"/>
    </location>
</feature>
<feature type="compositionally biased region" description="Basic and acidic residues" evidence="4">
    <location>
        <begin position="30"/>
        <end position="61"/>
    </location>
</feature>
<feature type="compositionally biased region" description="Basic and acidic residues" evidence="4">
    <location>
        <begin position="68"/>
        <end position="104"/>
    </location>
</feature>
<feature type="compositionally biased region" description="Low complexity" evidence="4">
    <location>
        <begin position="114"/>
        <end position="124"/>
    </location>
</feature>
<feature type="compositionally biased region" description="Basic and acidic residues" evidence="4">
    <location>
        <begin position="320"/>
        <end position="331"/>
    </location>
</feature>
<feature type="compositionally biased region" description="Basic and acidic residues" evidence="4">
    <location>
        <begin position="342"/>
        <end position="377"/>
    </location>
</feature>
<feature type="compositionally biased region" description="Basic and acidic residues" evidence="4">
    <location>
        <begin position="384"/>
        <end position="399"/>
    </location>
</feature>
<feature type="compositionally biased region" description="Low complexity" evidence="4">
    <location>
        <begin position="400"/>
        <end position="411"/>
    </location>
</feature>
<feature type="compositionally biased region" description="Basic and acidic residues" evidence="4">
    <location>
        <begin position="446"/>
        <end position="496"/>
    </location>
</feature>
<feature type="compositionally biased region" description="Basic and acidic residues" evidence="4">
    <location>
        <begin position="566"/>
        <end position="579"/>
    </location>
</feature>
<feature type="compositionally biased region" description="Basic and acidic residues" evidence="4">
    <location>
        <begin position="587"/>
        <end position="650"/>
    </location>
</feature>
<feature type="compositionally biased region" description="Basic and acidic residues" evidence="4">
    <location>
        <begin position="706"/>
        <end position="718"/>
    </location>
</feature>
<feature type="modified residue" description="N6-acetyllysine" evidence="3">
    <location>
        <position position="49"/>
    </location>
</feature>
<feature type="modified residue" description="Phosphoserine" evidence="3">
    <location>
        <position position="86"/>
    </location>
</feature>
<feature type="modified residue" description="Phosphoserine" evidence="2">
    <location>
        <position position="133"/>
    </location>
</feature>
<feature type="modified residue" description="Phosphoserine" evidence="3">
    <location>
        <position position="222"/>
    </location>
</feature>
<feature type="modified residue" description="Phosphoserine" evidence="2">
    <location>
        <position position="243"/>
    </location>
</feature>
<feature type="modified residue" description="Blocked amino end (Ser); in form erythrocyte">
    <location>
        <position position="290"/>
    </location>
</feature>
<feature type="modified residue" description="Phosphoserine" evidence="2">
    <location>
        <position position="367"/>
    </location>
</feature>
<feature type="modified residue" description="Phosphoserine" evidence="2">
    <location>
        <position position="369"/>
    </location>
</feature>
<feature type="modified residue" description="Phosphoserine" evidence="2">
    <location>
        <position position="376"/>
    </location>
</feature>
<feature type="modified residue" description="Phosphoserine" evidence="2">
    <location>
        <position position="444"/>
    </location>
</feature>
<feature type="modified residue" description="Phosphoserine" evidence="2">
    <location>
        <position position="520"/>
    </location>
</feature>
<feature type="modified residue" description="Phosphoserine" evidence="2">
    <location>
        <position position="531"/>
    </location>
</feature>
<feature type="modified residue" description="Phosphoserine" evidence="2">
    <location>
        <position position="579"/>
    </location>
</feature>
<feature type="modified residue" description="Phosphoserine" evidence="2">
    <location>
        <position position="581"/>
    </location>
</feature>
<feature type="cross-link" description="Glycyl lysine isopeptide (Lys-Gly) (interchain with G-Cter in SUMO2)" evidence="2">
    <location>
        <position position="32"/>
    </location>
</feature>
<keyword id="KW-0007">Acetylation</keyword>
<keyword id="KW-0903">Direct protein sequencing</keyword>
<keyword id="KW-1017">Isopeptide bond</keyword>
<keyword id="KW-0597">Phosphoprotein</keyword>
<keyword id="KW-0646">Protease inhibitor</keyword>
<keyword id="KW-1185">Reference proteome</keyword>
<keyword id="KW-0677">Repeat</keyword>
<keyword id="KW-0789">Thiol protease inhibitor</keyword>
<keyword id="KW-0832">Ubl conjugation</keyword>
<accession>P08855</accession>
<name>ICAL_RABIT</name>
<dbReference type="EMBL" id="M16476">
    <property type="protein sequence ID" value="AAA31186.1"/>
    <property type="molecule type" value="mRNA"/>
</dbReference>
<dbReference type="PIR" id="A26615">
    <property type="entry name" value="A26615"/>
</dbReference>
<dbReference type="RefSeq" id="NP_001075739.1">
    <property type="nucleotide sequence ID" value="NM_001082270.1"/>
</dbReference>
<dbReference type="SMR" id="P08855"/>
<dbReference type="FunCoup" id="P08855">
    <property type="interactions" value="685"/>
</dbReference>
<dbReference type="STRING" id="9986.ENSOCUP00000006752"/>
<dbReference type="MEROPS" id="I27.001"/>
<dbReference type="MEROPS" id="I27.002"/>
<dbReference type="MEROPS" id="I27.003"/>
<dbReference type="MEROPS" id="I27.004"/>
<dbReference type="PaxDb" id="9986-ENSOCUP00000006752"/>
<dbReference type="GeneID" id="100009098"/>
<dbReference type="KEGG" id="ocu:100009098"/>
<dbReference type="CTD" id="831"/>
<dbReference type="eggNOG" id="ENOG502RHIZ">
    <property type="taxonomic scope" value="Eukaryota"/>
</dbReference>
<dbReference type="InParanoid" id="P08855"/>
<dbReference type="OrthoDB" id="8926414at2759"/>
<dbReference type="Proteomes" id="UP000001811">
    <property type="component" value="Unplaced"/>
</dbReference>
<dbReference type="GO" id="GO:0005737">
    <property type="term" value="C:cytoplasm"/>
    <property type="evidence" value="ECO:0007669"/>
    <property type="project" value="TreeGrafter"/>
</dbReference>
<dbReference type="GO" id="GO:0010859">
    <property type="term" value="F:calcium-dependent cysteine-type endopeptidase inhibitor activity"/>
    <property type="evidence" value="ECO:0007669"/>
    <property type="project" value="TreeGrafter"/>
</dbReference>
<dbReference type="InterPro" id="IPR026998">
    <property type="entry name" value="Calpastatin"/>
</dbReference>
<dbReference type="InterPro" id="IPR001259">
    <property type="entry name" value="Prot_inh_calpain"/>
</dbReference>
<dbReference type="PANTHER" id="PTHR10077">
    <property type="entry name" value="CALPASTATIN"/>
    <property type="match status" value="1"/>
</dbReference>
<dbReference type="PANTHER" id="PTHR10077:SF0">
    <property type="entry name" value="CALPASTATIN"/>
    <property type="match status" value="1"/>
</dbReference>
<dbReference type="Pfam" id="PF00748">
    <property type="entry name" value="Calpain_inhib"/>
    <property type="match status" value="3"/>
</dbReference>
<comment type="function">
    <text>Specific inhibition of calpain (calcium-dependent cysteine protease). Plays a key role in postmortem tenderization of meat and have been proposed to be involved in muscle protein degradation in living tissue.</text>
</comment>
<comment type="domain">
    <text evidence="1">Each of the four flexible inhibitory domains can inhibit one calcium-bound calpain molecule by occupying both sides of the active site.</text>
</comment>
<comment type="miscellaneous">
    <text>In erythrocytes the protein lacks the N-terminal region of the liver inhibitor but retains three inhibitory units.</text>
</comment>
<comment type="similarity">
    <text evidence="5">Belongs to the protease inhibitor I27 (calpastatin) family.</text>
</comment>
<evidence type="ECO:0000250" key="1"/>
<evidence type="ECO:0000250" key="2">
    <source>
        <dbReference type="UniProtKB" id="P20810"/>
    </source>
</evidence>
<evidence type="ECO:0000250" key="3">
    <source>
        <dbReference type="UniProtKB" id="P51125"/>
    </source>
</evidence>
<evidence type="ECO:0000256" key="4">
    <source>
        <dbReference type="SAM" id="MobiDB-lite"/>
    </source>
</evidence>
<evidence type="ECO:0000305" key="5"/>
<gene>
    <name type="primary">CAST</name>
</gene>
<protein>
    <recommendedName>
        <fullName>Calpastatin</fullName>
    </recommendedName>
    <alternativeName>
        <fullName>Calpain inhibitor</fullName>
    </alternativeName>
    <component>
        <recommendedName>
            <fullName>Erythrocyte calpastatin</fullName>
        </recommendedName>
    </component>
</protein>